<comment type="function">
    <text>Actins are highly conserved proteins that are involved in various types of cell motility and are ubiquitously expressed in all eukaryotic cells.</text>
</comment>
<comment type="function">
    <text>Essential component of cell cytoskeleton; plays an important role in cytoplasmic streaming, cell shape determination, cell division, organelle movement and extension growth.</text>
</comment>
<comment type="catalytic activity">
    <reaction evidence="1">
        <text>ATP + H2O = ADP + phosphate + H(+)</text>
        <dbReference type="Rhea" id="RHEA:13065"/>
        <dbReference type="ChEBI" id="CHEBI:15377"/>
        <dbReference type="ChEBI" id="CHEBI:15378"/>
        <dbReference type="ChEBI" id="CHEBI:30616"/>
        <dbReference type="ChEBI" id="CHEBI:43474"/>
        <dbReference type="ChEBI" id="CHEBI:456216"/>
    </reaction>
</comment>
<comment type="subcellular location">
    <subcellularLocation>
        <location>Cytoplasm</location>
        <location>Cytoskeleton</location>
    </subcellularLocation>
</comment>
<comment type="similarity">
    <text evidence="2">Belongs to the actin family.</text>
</comment>
<dbReference type="EC" id="3.6.4.-" evidence="1"/>
<dbReference type="EMBL" id="D32140">
    <property type="protein sequence ID" value="BAA06866.1"/>
    <property type="molecule type" value="Genomic_DNA"/>
</dbReference>
<dbReference type="EMBL" id="AB095179">
    <property type="protein sequence ID" value="BAC67664.1"/>
    <property type="molecule type" value="Genomic_DNA"/>
</dbReference>
<dbReference type="EMBL" id="AP006495">
    <property type="protein sequence ID" value="BAM81077.1"/>
    <property type="molecule type" value="Genomic_DNA"/>
</dbReference>
<dbReference type="PIR" id="S65079">
    <property type="entry name" value="S65079"/>
</dbReference>
<dbReference type="RefSeq" id="XP_005537113.1">
    <property type="nucleotide sequence ID" value="XM_005537056.1"/>
</dbReference>
<dbReference type="SMR" id="P53500"/>
<dbReference type="STRING" id="280699.P53500"/>
<dbReference type="EnsemblPlants" id="CMM237CT">
    <property type="protein sequence ID" value="CMM237CT"/>
    <property type="gene ID" value="CMM237C"/>
</dbReference>
<dbReference type="GeneID" id="16994952"/>
<dbReference type="Gramene" id="CMM237CT">
    <property type="protein sequence ID" value="CMM237CT"/>
    <property type="gene ID" value="CMM237C"/>
</dbReference>
<dbReference type="KEGG" id="cme:CYME_CMM237C"/>
<dbReference type="eggNOG" id="KOG0676">
    <property type="taxonomic scope" value="Eukaryota"/>
</dbReference>
<dbReference type="OrthoDB" id="5132116at2759"/>
<dbReference type="Proteomes" id="UP000007014">
    <property type="component" value="Chromosome 13"/>
</dbReference>
<dbReference type="GO" id="GO:0005737">
    <property type="term" value="C:cytoplasm"/>
    <property type="evidence" value="ECO:0007669"/>
    <property type="project" value="UniProtKB-KW"/>
</dbReference>
<dbReference type="GO" id="GO:0005856">
    <property type="term" value="C:cytoskeleton"/>
    <property type="evidence" value="ECO:0007669"/>
    <property type="project" value="UniProtKB-SubCell"/>
</dbReference>
<dbReference type="GO" id="GO:0005524">
    <property type="term" value="F:ATP binding"/>
    <property type="evidence" value="ECO:0007669"/>
    <property type="project" value="UniProtKB-KW"/>
</dbReference>
<dbReference type="GO" id="GO:0016787">
    <property type="term" value="F:hydrolase activity"/>
    <property type="evidence" value="ECO:0007669"/>
    <property type="project" value="UniProtKB-KW"/>
</dbReference>
<dbReference type="CDD" id="cd10224">
    <property type="entry name" value="ASKHA_NBD_actin"/>
    <property type="match status" value="1"/>
</dbReference>
<dbReference type="FunFam" id="2.30.36.70:FF:000001">
    <property type="entry name" value="Actin, alpha skeletal muscle"/>
    <property type="match status" value="1"/>
</dbReference>
<dbReference type="FunFam" id="3.30.420.40:FF:000291">
    <property type="entry name" value="Actin, alpha skeletal muscle"/>
    <property type="match status" value="1"/>
</dbReference>
<dbReference type="FunFam" id="3.90.640.10:FF:000001">
    <property type="entry name" value="Actin, muscle"/>
    <property type="match status" value="1"/>
</dbReference>
<dbReference type="FunFam" id="3.30.420.40:FF:000404">
    <property type="entry name" value="Major actin"/>
    <property type="match status" value="1"/>
</dbReference>
<dbReference type="FunFam" id="3.30.420.40:FF:000058">
    <property type="entry name" value="Putative actin-related protein 5"/>
    <property type="match status" value="1"/>
</dbReference>
<dbReference type="Gene3D" id="3.30.420.40">
    <property type="match status" value="2"/>
</dbReference>
<dbReference type="Gene3D" id="3.90.640.10">
    <property type="entry name" value="Actin, Chain A, domain 4"/>
    <property type="match status" value="1"/>
</dbReference>
<dbReference type="InterPro" id="IPR004000">
    <property type="entry name" value="Actin"/>
</dbReference>
<dbReference type="InterPro" id="IPR020902">
    <property type="entry name" value="Actin/actin-like_CS"/>
</dbReference>
<dbReference type="InterPro" id="IPR004001">
    <property type="entry name" value="Actin_CS"/>
</dbReference>
<dbReference type="InterPro" id="IPR043129">
    <property type="entry name" value="ATPase_NBD"/>
</dbReference>
<dbReference type="PANTHER" id="PTHR11937">
    <property type="entry name" value="ACTIN"/>
    <property type="match status" value="1"/>
</dbReference>
<dbReference type="Pfam" id="PF00022">
    <property type="entry name" value="Actin"/>
    <property type="match status" value="1"/>
</dbReference>
<dbReference type="PRINTS" id="PR00190">
    <property type="entry name" value="ACTIN"/>
</dbReference>
<dbReference type="SMART" id="SM00268">
    <property type="entry name" value="ACTIN"/>
    <property type="match status" value="1"/>
</dbReference>
<dbReference type="SUPFAM" id="SSF53067">
    <property type="entry name" value="Actin-like ATPase domain"/>
    <property type="match status" value="2"/>
</dbReference>
<dbReference type="PROSITE" id="PS00406">
    <property type="entry name" value="ACTINS_1"/>
    <property type="match status" value="1"/>
</dbReference>
<dbReference type="PROSITE" id="PS00432">
    <property type="entry name" value="ACTINS_2"/>
    <property type="match status" value="1"/>
</dbReference>
<dbReference type="PROSITE" id="PS01132">
    <property type="entry name" value="ACTINS_ACT_LIKE"/>
    <property type="match status" value="1"/>
</dbReference>
<keyword id="KW-0067">ATP-binding</keyword>
<keyword id="KW-0963">Cytoplasm</keyword>
<keyword id="KW-0206">Cytoskeleton</keyword>
<keyword id="KW-0378">Hydrolase</keyword>
<keyword id="KW-0547">Nucleotide-binding</keyword>
<keyword id="KW-1185">Reference proteome</keyword>
<sequence length="377" mass="42005">MTEEEITALVIDNGSGMVKAGFAGDDAPRAVFPSIVGRPRHQAVMVGMGQKDSYVGDEAQSKRGILSLKYPIEHGIVTNWDDMEKIWYHTFYNELRISPEDHPVLLTEAPLNPKANREKMTQIMFETFNVPAMYVAIQAVLSLYASGRTTGIVVDSGDGVTHTVPIYEGYALPHAIMRIDLAGRDLTDYLAKILTERGYSFTTTAEREIVRDIKEKCCYVAQDYDHELEIASSQPAKIDKQYELPDGQIITIGSERFRCPEVLFQPSLIGMEGEGIHNVAYQSIMKCDVDIRKDLYANVVLSGGTTMFPGIADRMQRELASVAPSSVKIKLVAPAERKYSVWIGGSILASLSTFQQMWISKAEYDEFGPSVVHRKCF</sequence>
<proteinExistence type="inferred from homology"/>
<name>ACT_CYAM1</name>
<protein>
    <recommendedName>
        <fullName>Actin</fullName>
        <ecNumber evidence="1">3.6.4.-</ecNumber>
    </recommendedName>
</protein>
<gene>
    <name type="ORF">CYME_CMM237C</name>
</gene>
<evidence type="ECO:0000250" key="1">
    <source>
        <dbReference type="UniProtKB" id="P68137"/>
    </source>
</evidence>
<evidence type="ECO:0000305" key="2"/>
<organism>
    <name type="scientific">Cyanidioschyzon merolae (strain NIES-3377 / 10D)</name>
    <name type="common">Unicellular red alga</name>
    <dbReference type="NCBI Taxonomy" id="280699"/>
    <lineage>
        <taxon>Eukaryota</taxon>
        <taxon>Rhodophyta</taxon>
        <taxon>Bangiophyceae</taxon>
        <taxon>Cyanidiales</taxon>
        <taxon>Cyanidiaceae</taxon>
        <taxon>Cyanidioschyzon</taxon>
    </lineage>
</organism>
<feature type="chain" id="PRO_0000088919" description="Actin">
    <location>
        <begin position="1"/>
        <end position="377"/>
    </location>
</feature>
<reference key="1">
    <citation type="journal article" date="1995" name="Curr. Genet.">
        <title>Isolation, characterization and chromosomal mapping of an actin gene from the primitive red alga Cyanidioschyzon merolae.</title>
        <authorList>
            <person name="Takahashi H."/>
            <person name="Takano H."/>
            <person name="Yokoyama A."/>
            <person name="Hara Y."/>
            <person name="Kawano S."/>
            <person name="Toh-e A."/>
            <person name="Kuroiwa T."/>
        </authorList>
    </citation>
    <scope>NUCLEOTIDE SEQUENCE [GENOMIC DNA]</scope>
</reference>
<reference key="2">
    <citation type="journal article" date="2003" name="J. Mol. Evol.">
        <title>The phylogenetic position of red algae revealed by multiple nuclear genes from mitochondria-containing eukaryotes and an alternative hypothesis on the origin of plastids.</title>
        <authorList>
            <person name="Nozaki H."/>
            <person name="Matsuzaki M."/>
            <person name="Takahara M."/>
            <person name="Misumi O."/>
            <person name="Kuroiwa H."/>
            <person name="Hasegawa M."/>
            <person name="Shin-i T."/>
            <person name="Kohara Y."/>
            <person name="Ogasawara N."/>
            <person name="Kuroiwa T."/>
        </authorList>
    </citation>
    <scope>NUCLEOTIDE SEQUENCE [GENOMIC DNA]</scope>
    <source>
        <strain>NIES-3377 / 10D</strain>
    </source>
</reference>
<reference key="3">
    <citation type="journal article" date="2004" name="Nature">
        <title>Genome sequence of the ultrasmall unicellular red alga Cyanidioschyzon merolae 10D.</title>
        <authorList>
            <person name="Matsuzaki M."/>
            <person name="Misumi O."/>
            <person name="Shin-i T."/>
            <person name="Maruyama S."/>
            <person name="Takahara M."/>
            <person name="Miyagishima S."/>
            <person name="Mori T."/>
            <person name="Nishida K."/>
            <person name="Yagisawa F."/>
            <person name="Nishida K."/>
            <person name="Yoshida Y."/>
            <person name="Nishimura Y."/>
            <person name="Nakao S."/>
            <person name="Kobayashi T."/>
            <person name="Momoyama Y."/>
            <person name="Higashiyama T."/>
            <person name="Minoda A."/>
            <person name="Sano M."/>
            <person name="Nomoto H."/>
            <person name="Oishi K."/>
            <person name="Hayashi H."/>
            <person name="Ohta F."/>
            <person name="Nishizaka S."/>
            <person name="Haga S."/>
            <person name="Miura S."/>
            <person name="Morishita T."/>
            <person name="Kabeya Y."/>
            <person name="Terasawa K."/>
            <person name="Suzuki Y."/>
            <person name="Ishii Y."/>
            <person name="Asakawa S."/>
            <person name="Takano H."/>
            <person name="Ohta N."/>
            <person name="Kuroiwa H."/>
            <person name="Tanaka K."/>
            <person name="Shimizu N."/>
            <person name="Sugano S."/>
            <person name="Sato N."/>
            <person name="Nozaki H."/>
            <person name="Ogasawara N."/>
            <person name="Kohara Y."/>
            <person name="Kuroiwa T."/>
        </authorList>
    </citation>
    <scope>NUCLEOTIDE SEQUENCE [LARGE SCALE GENOMIC DNA]</scope>
    <source>
        <strain>NIES-3377 / 10D</strain>
    </source>
</reference>
<reference key="4">
    <citation type="journal article" date="2007" name="BMC Biol.">
        <title>A 100%-complete sequence reveals unusually simple genomic features in the hot-spring red alga Cyanidioschyzon merolae.</title>
        <authorList>
            <person name="Nozaki H."/>
            <person name="Takano H."/>
            <person name="Misumi O."/>
            <person name="Terasawa K."/>
            <person name="Matsuzaki M."/>
            <person name="Maruyama S."/>
            <person name="Nishida K."/>
            <person name="Yagisawa F."/>
            <person name="Yoshida Y."/>
            <person name="Fujiwara T."/>
            <person name="Takio S."/>
            <person name="Tamura K."/>
            <person name="Chung S.J."/>
            <person name="Nakamura S."/>
            <person name="Kuroiwa H."/>
            <person name="Tanaka K."/>
            <person name="Sato N."/>
            <person name="Kuroiwa T."/>
        </authorList>
    </citation>
    <scope>NUCLEOTIDE SEQUENCE [LARGE SCALE GENOMIC DNA]</scope>
    <source>
        <strain>NIES-3377 / 10D</strain>
    </source>
</reference>
<accession>P53500</accession>
<accession>A0A125YHS2</accession>
<accession>M1VDX9</accession>
<accession>Q54A44</accession>